<keyword id="KW-0067">ATP-binding</keyword>
<keyword id="KW-0238">DNA-binding</keyword>
<keyword id="KW-0324">Glycolysis</keyword>
<keyword id="KW-0418">Kinase</keyword>
<keyword id="KW-0472">Membrane</keyword>
<keyword id="KW-0511">Multifunctional enzyme</keyword>
<keyword id="KW-0547">Nucleotide-binding</keyword>
<keyword id="KW-1185">Reference proteome</keyword>
<keyword id="KW-0804">Transcription</keyword>
<keyword id="KW-0805">Transcription regulation</keyword>
<keyword id="KW-0808">Transferase</keyword>
<keyword id="KW-0812">Transmembrane</keyword>
<keyword id="KW-1133">Transmembrane helix</keyword>
<comment type="catalytic activity">
    <reaction>
        <text>D-glucose + ATP = D-glucose 6-phosphate + ADP + H(+)</text>
        <dbReference type="Rhea" id="RHEA:17825"/>
        <dbReference type="ChEBI" id="CHEBI:4167"/>
        <dbReference type="ChEBI" id="CHEBI:15378"/>
        <dbReference type="ChEBI" id="CHEBI:30616"/>
        <dbReference type="ChEBI" id="CHEBI:61548"/>
        <dbReference type="ChEBI" id="CHEBI:456216"/>
        <dbReference type="EC" id="2.7.1.2"/>
    </reaction>
</comment>
<comment type="subcellular location">
    <subcellularLocation>
        <location evidence="3">Membrane</location>
        <topology evidence="3">Single-pass membrane protein</topology>
    </subcellularLocation>
</comment>
<comment type="similarity">
    <text evidence="3">In the N-terminal section; belongs to the bacterial glucokinase family.</text>
</comment>
<proteinExistence type="inferred from homology"/>
<sequence>MSTGAQTKAAAASQHADGPRLLADVGGTNARFALETGPGEITQIRVYPGAEYPTLTDAIRKYLKDAKIGRVNHAAIAIANPVDGDQVRMTNHNWSFSIEATRRALGFDTLLVVNDFTALAMALPGLTDAQRVQIGGGTRRQNSVIGLMGPGTGLGVSGLIPADDRWIALGSEGGHATFAPMDEREDLVLQYARRKYPHVSFERVCAGPGMEIIYRALAARDKKRIAANVDTADIVERAHAGDALALEAVECFCAILGTFAGNLAVTLGALGGIYIGGGVVPKLGELFMRSPFRARFEAKGRFEAYLANIPTYLITAEYPAFLGVSAILAEQLSNRTGGASSAVFERIRQMRDALTPAERRVADLALNHPRSIINDPIVNIARKADVSQPTVIRFCRSLGCQGLSDFKLKLATGLTGTIPMSHSQVHLGDTATDFGAKVLDNTVSAILQLREHLNFEHVEQAIDILNNARRIEFYGLGNSNIVAQDAHYKFFRFGIPTIAYGDLYMQAASAALLGKGDVIVAVSKSGRAPELLRVLDVAMQAGAKVIAITSSNTPLAKRATVALETDHIEMRESQLSMISRILHLVMIDILAVGVAIRRAAPNAELAEAMARAKARAGASAGDEAADVLDWLSHGAAPAAKD</sequence>
<dbReference type="EC" id="2.7.1.2"/>
<dbReference type="EMBL" id="CP000010">
    <property type="protein sequence ID" value="AAU49971.1"/>
    <property type="molecule type" value="Genomic_DNA"/>
</dbReference>
<dbReference type="RefSeq" id="WP_011204087.1">
    <property type="nucleotide sequence ID" value="NC_006348.1"/>
</dbReference>
<dbReference type="RefSeq" id="YP_103702.1">
    <property type="nucleotide sequence ID" value="NC_006348.1"/>
</dbReference>
<dbReference type="SMR" id="Q62HW8"/>
<dbReference type="GeneID" id="92979838"/>
<dbReference type="KEGG" id="bma:BMA2132"/>
<dbReference type="PATRIC" id="fig|243160.12.peg.2200"/>
<dbReference type="eggNOG" id="COG0837">
    <property type="taxonomic scope" value="Bacteria"/>
</dbReference>
<dbReference type="eggNOG" id="COG1737">
    <property type="taxonomic scope" value="Bacteria"/>
</dbReference>
<dbReference type="HOGENOM" id="CLU_016801_0_0_4"/>
<dbReference type="Proteomes" id="UP000006693">
    <property type="component" value="Chromosome 1"/>
</dbReference>
<dbReference type="GO" id="GO:0005829">
    <property type="term" value="C:cytosol"/>
    <property type="evidence" value="ECO:0007669"/>
    <property type="project" value="TreeGrafter"/>
</dbReference>
<dbReference type="GO" id="GO:0016020">
    <property type="term" value="C:membrane"/>
    <property type="evidence" value="ECO:0007669"/>
    <property type="project" value="UniProtKB-SubCell"/>
</dbReference>
<dbReference type="GO" id="GO:0005524">
    <property type="term" value="F:ATP binding"/>
    <property type="evidence" value="ECO:0007669"/>
    <property type="project" value="UniProtKB-UniRule"/>
</dbReference>
<dbReference type="GO" id="GO:0005536">
    <property type="term" value="F:D-glucose binding"/>
    <property type="evidence" value="ECO:0007669"/>
    <property type="project" value="InterPro"/>
</dbReference>
<dbReference type="GO" id="GO:0003677">
    <property type="term" value="F:DNA binding"/>
    <property type="evidence" value="ECO:0007669"/>
    <property type="project" value="UniProtKB-KW"/>
</dbReference>
<dbReference type="GO" id="GO:0003700">
    <property type="term" value="F:DNA-binding transcription factor activity"/>
    <property type="evidence" value="ECO:0007669"/>
    <property type="project" value="InterPro"/>
</dbReference>
<dbReference type="GO" id="GO:0004340">
    <property type="term" value="F:glucokinase activity"/>
    <property type="evidence" value="ECO:0007669"/>
    <property type="project" value="UniProtKB-UniRule"/>
</dbReference>
<dbReference type="GO" id="GO:0006096">
    <property type="term" value="P:glycolytic process"/>
    <property type="evidence" value="ECO:0007669"/>
    <property type="project" value="UniProtKB-UniRule"/>
</dbReference>
<dbReference type="CDD" id="cd24008">
    <property type="entry name" value="ASKHA_NBD_GLK"/>
    <property type="match status" value="1"/>
</dbReference>
<dbReference type="CDD" id="cd05013">
    <property type="entry name" value="SIS_RpiR"/>
    <property type="match status" value="1"/>
</dbReference>
<dbReference type="Gene3D" id="3.30.420.40">
    <property type="match status" value="1"/>
</dbReference>
<dbReference type="Gene3D" id="3.40.367.20">
    <property type="match status" value="1"/>
</dbReference>
<dbReference type="Gene3D" id="3.40.50.10490">
    <property type="entry name" value="Glucose-6-phosphate isomerase like protein, domain 1"/>
    <property type="match status" value="1"/>
</dbReference>
<dbReference type="Gene3D" id="1.10.10.10">
    <property type="entry name" value="Winged helix-like DNA-binding domain superfamily/Winged helix DNA-binding domain"/>
    <property type="match status" value="1"/>
</dbReference>
<dbReference type="HAMAP" id="MF_00524">
    <property type="entry name" value="Glucokinase"/>
    <property type="match status" value="1"/>
</dbReference>
<dbReference type="InterPro" id="IPR043129">
    <property type="entry name" value="ATPase_NBD"/>
</dbReference>
<dbReference type="InterPro" id="IPR050201">
    <property type="entry name" value="Bacterial_glucokinase"/>
</dbReference>
<dbReference type="InterPro" id="IPR003836">
    <property type="entry name" value="Glucokinase"/>
</dbReference>
<dbReference type="InterPro" id="IPR009057">
    <property type="entry name" value="Homeodomain-like_sf"/>
</dbReference>
<dbReference type="InterPro" id="IPR000281">
    <property type="entry name" value="HTH_RpiR"/>
</dbReference>
<dbReference type="InterPro" id="IPR035472">
    <property type="entry name" value="RpiR-like_SIS"/>
</dbReference>
<dbReference type="InterPro" id="IPR001347">
    <property type="entry name" value="SIS_dom"/>
</dbReference>
<dbReference type="InterPro" id="IPR046348">
    <property type="entry name" value="SIS_dom_sf"/>
</dbReference>
<dbReference type="InterPro" id="IPR036388">
    <property type="entry name" value="WH-like_DNA-bd_sf"/>
</dbReference>
<dbReference type="NCBIfam" id="TIGR00749">
    <property type="entry name" value="glk"/>
    <property type="match status" value="1"/>
</dbReference>
<dbReference type="NCBIfam" id="NF001416">
    <property type="entry name" value="PRK00292.1-3"/>
    <property type="match status" value="1"/>
</dbReference>
<dbReference type="NCBIfam" id="NF010701">
    <property type="entry name" value="PRK14101.1"/>
    <property type="match status" value="1"/>
</dbReference>
<dbReference type="PANTHER" id="PTHR47690">
    <property type="entry name" value="GLUCOKINASE"/>
    <property type="match status" value="1"/>
</dbReference>
<dbReference type="PANTHER" id="PTHR47690:SF1">
    <property type="entry name" value="GLUCOKINASE"/>
    <property type="match status" value="1"/>
</dbReference>
<dbReference type="Pfam" id="PF02685">
    <property type="entry name" value="Glucokinase"/>
    <property type="match status" value="1"/>
</dbReference>
<dbReference type="Pfam" id="PF01418">
    <property type="entry name" value="HTH_6"/>
    <property type="match status" value="1"/>
</dbReference>
<dbReference type="Pfam" id="PF01380">
    <property type="entry name" value="SIS"/>
    <property type="match status" value="1"/>
</dbReference>
<dbReference type="SUPFAM" id="SSF53067">
    <property type="entry name" value="Actin-like ATPase domain"/>
    <property type="match status" value="1"/>
</dbReference>
<dbReference type="SUPFAM" id="SSF46689">
    <property type="entry name" value="Homeodomain-like"/>
    <property type="match status" value="1"/>
</dbReference>
<dbReference type="SUPFAM" id="SSF53697">
    <property type="entry name" value="SIS domain"/>
    <property type="match status" value="1"/>
</dbReference>
<dbReference type="PROSITE" id="PS51071">
    <property type="entry name" value="HTH_RPIR"/>
    <property type="match status" value="1"/>
</dbReference>
<dbReference type="PROSITE" id="PS51464">
    <property type="entry name" value="SIS"/>
    <property type="match status" value="1"/>
</dbReference>
<accession>Q62HW8</accession>
<reference key="1">
    <citation type="journal article" date="2004" name="Proc. Natl. Acad. Sci. U.S.A.">
        <title>Structural flexibility in the Burkholderia mallei genome.</title>
        <authorList>
            <person name="Nierman W.C."/>
            <person name="DeShazer D."/>
            <person name="Kim H.S."/>
            <person name="Tettelin H."/>
            <person name="Nelson K.E."/>
            <person name="Feldblyum T.V."/>
            <person name="Ulrich R.L."/>
            <person name="Ronning C.M."/>
            <person name="Brinkac L.M."/>
            <person name="Daugherty S.C."/>
            <person name="Davidsen T.D."/>
            <person name="DeBoy R.T."/>
            <person name="Dimitrov G."/>
            <person name="Dodson R.J."/>
            <person name="Durkin A.S."/>
            <person name="Gwinn M.L."/>
            <person name="Haft D.H."/>
            <person name="Khouri H.M."/>
            <person name="Kolonay J.F."/>
            <person name="Madupu R."/>
            <person name="Mohammoud Y."/>
            <person name="Nelson W.C."/>
            <person name="Radune D."/>
            <person name="Romero C.M."/>
            <person name="Sarria S."/>
            <person name="Selengut J."/>
            <person name="Shamblin C."/>
            <person name="Sullivan S.A."/>
            <person name="White O."/>
            <person name="Yu Y."/>
            <person name="Zafar N."/>
            <person name="Zhou L."/>
            <person name="Fraser C.M."/>
        </authorList>
    </citation>
    <scope>NUCLEOTIDE SEQUENCE [LARGE SCALE GENOMIC DNA]</scope>
    <source>
        <strain>ATCC 23344</strain>
    </source>
</reference>
<feature type="chain" id="PRO_0000268797" description="Bifunctional protein glk">
    <location>
        <begin position="1"/>
        <end position="641"/>
    </location>
</feature>
<feature type="transmembrane region" description="Helical" evidence="2">
    <location>
        <begin position="576"/>
        <end position="596"/>
    </location>
</feature>
<feature type="domain" description="HTH rpiR-type">
    <location>
        <begin position="341"/>
        <end position="417"/>
    </location>
</feature>
<feature type="domain" description="SIS">
    <location>
        <begin position="461"/>
        <end position="600"/>
    </location>
</feature>
<feature type="DNA-binding region" description="H-T-H motif" evidence="1">
    <location>
        <begin position="377"/>
        <end position="396"/>
    </location>
</feature>
<feature type="region of interest" description="Glucokinase">
    <location>
        <begin position="1"/>
        <end position="340"/>
    </location>
</feature>
<feature type="region of interest" description="Putative HTH-type transcriptional regulator">
    <location>
        <begin position="341"/>
        <end position="641"/>
    </location>
</feature>
<feature type="binding site" evidence="2">
    <location>
        <begin position="23"/>
        <end position="28"/>
    </location>
    <ligand>
        <name>ATP</name>
        <dbReference type="ChEBI" id="CHEBI:30616"/>
    </ligand>
</feature>
<name>GLK_BURMA</name>
<evidence type="ECO:0000250" key="1"/>
<evidence type="ECO:0000255" key="2"/>
<evidence type="ECO:0000305" key="3"/>
<protein>
    <recommendedName>
        <fullName>Bifunctional protein glk</fullName>
    </recommendedName>
    <domain>
        <recommendedName>
            <fullName>Glucokinase</fullName>
            <ecNumber>2.7.1.2</ecNumber>
        </recommendedName>
        <alternativeName>
            <fullName>Glucose kinase</fullName>
        </alternativeName>
    </domain>
    <domain>
        <recommendedName>
            <fullName>Putative HTH-type transcriptional regulator</fullName>
        </recommendedName>
    </domain>
</protein>
<gene>
    <name type="primary">glk</name>
    <name type="ordered locus">BMA2132</name>
</gene>
<organism>
    <name type="scientific">Burkholderia mallei (strain ATCC 23344)</name>
    <dbReference type="NCBI Taxonomy" id="243160"/>
    <lineage>
        <taxon>Bacteria</taxon>
        <taxon>Pseudomonadati</taxon>
        <taxon>Pseudomonadota</taxon>
        <taxon>Betaproteobacteria</taxon>
        <taxon>Burkholderiales</taxon>
        <taxon>Burkholderiaceae</taxon>
        <taxon>Burkholderia</taxon>
        <taxon>pseudomallei group</taxon>
    </lineage>
</organism>